<comment type="function">
    <text evidence="1">Hydrolyzes N-terminal residues in D-amino acid-containing peptides.</text>
</comment>
<comment type="catalytic activity">
    <reaction evidence="1">
        <text>Release of an N-terminal D-amino acid from a peptide, Xaa-|-Yaa-, in which Xaa is preferably D-Ala, D-Ser or D-Thr. D-amino acid amides and methyl esters also are hydrolyzed, as is glycine amide.</text>
        <dbReference type="EC" id="3.4.11.19"/>
    </reaction>
</comment>
<comment type="activity regulation">
    <text evidence="1">Inhibited by beta-lactam compounds such as 6-aminopenicillic acid, 7-aminocephalosporanic acid, benzylpenicillin and ampicillin. Inhibited by p-chloromercuribenzoate.</text>
</comment>
<comment type="subunit">
    <text evidence="1">Homodimer.</text>
</comment>
<comment type="similarity">
    <text evidence="1">Belongs to the peptidase S12 family.</text>
</comment>
<organism>
    <name type="scientific">Cereibacter sphaeroides (strain ATCC 17023 / DSM 158 / JCM 6121 / CCUG 31486 / LMG 2827 / NBRC 12203 / NCIMB 8253 / ATH 2.4.1.)</name>
    <name type="common">Rhodobacter sphaeroides</name>
    <dbReference type="NCBI Taxonomy" id="272943"/>
    <lineage>
        <taxon>Bacteria</taxon>
        <taxon>Pseudomonadati</taxon>
        <taxon>Pseudomonadota</taxon>
        <taxon>Alphaproteobacteria</taxon>
        <taxon>Rhodobacterales</taxon>
        <taxon>Paracoccaceae</taxon>
        <taxon>Cereibacter</taxon>
    </lineage>
</organism>
<evidence type="ECO:0000255" key="1">
    <source>
        <dbReference type="HAMAP-Rule" id="MF_01960"/>
    </source>
</evidence>
<gene>
    <name evidence="1" type="primary">dap</name>
    <name type="ordered locus">RHOS4_32880</name>
    <name type="ORF">RSP_3246</name>
</gene>
<protein>
    <recommendedName>
        <fullName evidence="1">D-aminopeptidase</fullName>
        <ecNumber evidence="1">3.4.11.19</ecNumber>
    </recommendedName>
</protein>
<feature type="chain" id="PRO_0000250697" description="D-aminopeptidase">
    <location>
        <begin position="1"/>
        <end position="516"/>
    </location>
</feature>
<feature type="region of interest" description="Important for specificity" evidence="1">
    <location>
        <begin position="476"/>
        <end position="486"/>
    </location>
</feature>
<feature type="active site" description="Nucleophile" evidence="1">
    <location>
        <position position="61"/>
    </location>
</feature>
<feature type="active site" description="Proton donor/acceptor" evidence="1">
    <location>
        <position position="64"/>
    </location>
</feature>
<feature type="binding site" evidence="1">
    <location>
        <position position="480"/>
    </location>
    <ligand>
        <name>substrate</name>
    </ligand>
</feature>
<name>DAP_CERS4</name>
<accession>Q3IX78</accession>
<sequence>MTLDLDALDRALDALPNLFRGPGGVAGVVKDGQVVASRAWGYADLTRRRPMETGTRLPICSISKQFTCGALLDTLGDTAAYDARVAEFLPQFEGPLPTLRQLCDNQSGLRDYWALTVLQGAEAAQTFRREDALPLIARMKTGHFPPGTAYSYCNCNFRIVSEILESETGRALRDLYAERIFGPAGMRTAELTSDTRHPADEVVGYEGSDAVGFFPADNGIFWIGDAGISASLQDMLAYESWIDATRNDENSIYRRISVPPAYVCGTPASYGFGLSHETVAGVKVTGHGGALRGFRAQRFHAADERLSVVVIFNHEASAHAAASSLLAAALGHEAPKGARPEGWAGQWLDPESGLLLRVGEDAEGLTLRFATGPDRLTAGEDGVPRGAGVSLAREGAMLVMNRTSDNLTVRAEPLPVVAVADAGEIAGRYHARELEADLVIEARDGGAYAGFEGLLGAGPMERLHPVGPDVWIVTTRRSMDAPAPGDWTLQVRREGGAVTGLRLGCWLARRIDYARV</sequence>
<proteinExistence type="inferred from homology"/>
<keyword id="KW-0031">Aminopeptidase</keyword>
<keyword id="KW-0378">Hydrolase</keyword>
<keyword id="KW-0645">Protease</keyword>
<keyword id="KW-1185">Reference proteome</keyword>
<reference key="1">
    <citation type="submission" date="2005-09" db="EMBL/GenBank/DDBJ databases">
        <title>Complete sequence of chromosome 2 of Rhodobacter sphaeroides 2.4.1.</title>
        <authorList>
            <person name="Copeland A."/>
            <person name="Lucas S."/>
            <person name="Lapidus A."/>
            <person name="Barry K."/>
            <person name="Detter J.C."/>
            <person name="Glavina T."/>
            <person name="Hammon N."/>
            <person name="Israni S."/>
            <person name="Pitluck S."/>
            <person name="Richardson P."/>
            <person name="Mackenzie C."/>
            <person name="Choudhary M."/>
            <person name="Larimer F."/>
            <person name="Hauser L.J."/>
            <person name="Land M."/>
            <person name="Donohue T.J."/>
            <person name="Kaplan S."/>
        </authorList>
    </citation>
    <scope>NUCLEOTIDE SEQUENCE [LARGE SCALE GENOMIC DNA]</scope>
    <source>
        <strain>ATCC 17023 / DSM 158 / JCM 6121 / CCUG 31486 / LMG 2827 / NBRC 12203 / NCIMB 8253 / ATH 2.4.1.</strain>
    </source>
</reference>
<dbReference type="EC" id="3.4.11.19" evidence="1"/>
<dbReference type="EMBL" id="CP000144">
    <property type="protein sequence ID" value="ABA80856.1"/>
    <property type="molecule type" value="Genomic_DNA"/>
</dbReference>
<dbReference type="RefSeq" id="WP_011339153.1">
    <property type="nucleotide sequence ID" value="NC_007494.2"/>
</dbReference>
<dbReference type="RefSeq" id="YP_354757.1">
    <property type="nucleotide sequence ID" value="NC_007494.2"/>
</dbReference>
<dbReference type="SMR" id="Q3IX78"/>
<dbReference type="STRING" id="272943.RSP_3246"/>
<dbReference type="MEROPS" id="S12.002"/>
<dbReference type="EnsemblBacteria" id="ABA80856">
    <property type="protein sequence ID" value="ABA80856"/>
    <property type="gene ID" value="RSP_3246"/>
</dbReference>
<dbReference type="GeneID" id="3721849"/>
<dbReference type="KEGG" id="rsp:RSP_3246"/>
<dbReference type="PATRIC" id="fig|272943.9.peg.3676"/>
<dbReference type="eggNOG" id="COG1680">
    <property type="taxonomic scope" value="Bacteria"/>
</dbReference>
<dbReference type="OrthoDB" id="7791015at2"/>
<dbReference type="PhylomeDB" id="Q3IX78"/>
<dbReference type="Proteomes" id="UP000002703">
    <property type="component" value="Chromosome 2"/>
</dbReference>
<dbReference type="GO" id="GO:0004177">
    <property type="term" value="F:aminopeptidase activity"/>
    <property type="evidence" value="ECO:0007669"/>
    <property type="project" value="UniProtKB-UniRule"/>
</dbReference>
<dbReference type="GO" id="GO:0006508">
    <property type="term" value="P:proteolysis"/>
    <property type="evidence" value="ECO:0007669"/>
    <property type="project" value="UniProtKB-KW"/>
</dbReference>
<dbReference type="Gene3D" id="2.40.128.50">
    <property type="match status" value="2"/>
</dbReference>
<dbReference type="Gene3D" id="3.40.710.10">
    <property type="entry name" value="DD-peptidase/beta-lactamase superfamily"/>
    <property type="match status" value="1"/>
</dbReference>
<dbReference type="HAMAP" id="MF_01960">
    <property type="entry name" value="D_aminopeptidase"/>
    <property type="match status" value="1"/>
</dbReference>
<dbReference type="InterPro" id="IPR050491">
    <property type="entry name" value="Bact_CellWall_Synth/Modif"/>
</dbReference>
<dbReference type="InterPro" id="IPR001466">
    <property type="entry name" value="Beta-lactam-related"/>
</dbReference>
<dbReference type="InterPro" id="IPR012338">
    <property type="entry name" value="Beta-lactam/transpept-like"/>
</dbReference>
<dbReference type="InterPro" id="IPR027279">
    <property type="entry name" value="D_amino_pept/lipop_sf"/>
</dbReference>
<dbReference type="InterPro" id="IPR023645">
    <property type="entry name" value="DAP"/>
</dbReference>
<dbReference type="InterPro" id="IPR012856">
    <property type="entry name" value="DAP_B_dom"/>
</dbReference>
<dbReference type="NCBIfam" id="NF009622">
    <property type="entry name" value="PRK13128.1"/>
    <property type="match status" value="1"/>
</dbReference>
<dbReference type="PANTHER" id="PTHR46825:SF9">
    <property type="entry name" value="BETA-LACTAMASE-RELATED DOMAIN-CONTAINING PROTEIN"/>
    <property type="match status" value="1"/>
</dbReference>
<dbReference type="PANTHER" id="PTHR46825">
    <property type="entry name" value="D-ALANYL-D-ALANINE-CARBOXYPEPTIDASE/ENDOPEPTIDASE AMPH"/>
    <property type="match status" value="1"/>
</dbReference>
<dbReference type="Pfam" id="PF00144">
    <property type="entry name" value="Beta-lactamase"/>
    <property type="match status" value="1"/>
</dbReference>
<dbReference type="Pfam" id="PF07930">
    <property type="entry name" value="DAP_B"/>
    <property type="match status" value="1"/>
</dbReference>
<dbReference type="SUPFAM" id="SSF56601">
    <property type="entry name" value="beta-lactamase/transpeptidase-like"/>
    <property type="match status" value="1"/>
</dbReference>
<dbReference type="SUPFAM" id="SSF50886">
    <property type="entry name" value="D-aminopeptidase, middle and C-terminal domains"/>
    <property type="match status" value="2"/>
</dbReference>